<keyword id="KW-0963">Cytoplasm</keyword>
<keyword id="KW-0227">DNA damage</keyword>
<keyword id="KW-0233">DNA recombination</keyword>
<keyword id="KW-0234">DNA repair</keyword>
<keyword id="KW-0238">DNA-binding</keyword>
<keyword id="KW-0255">Endonuclease</keyword>
<keyword id="KW-0378">Hydrolase</keyword>
<keyword id="KW-0460">Magnesium</keyword>
<keyword id="KW-0479">Metal-binding</keyword>
<keyword id="KW-0540">Nuclease</keyword>
<name>RUVC_BURM7</name>
<sequence>MRILGIDPGLRVTGFGVIDVSGHQLAYVASGVIKTPTADLPTRLGTIYDGVSTLIREHTPDQAAIEKVFVNVNPQSTLLLGQARGAAICGLVSGGLPVAEYTALQLKQAVVGYGRATKEQMQEMVARLLSLSGRPGTDAADALGMAICHAHGGNTLNTLGGIAPALAKKGLRVRRGRLVG</sequence>
<gene>
    <name evidence="1" type="primary">ruvC</name>
    <name type="ordered locus">BMA10247_2534</name>
</gene>
<reference key="1">
    <citation type="journal article" date="2010" name="Genome Biol. Evol.">
        <title>Continuing evolution of Burkholderia mallei through genome reduction and large-scale rearrangements.</title>
        <authorList>
            <person name="Losada L."/>
            <person name="Ronning C.M."/>
            <person name="DeShazer D."/>
            <person name="Woods D."/>
            <person name="Fedorova N."/>
            <person name="Kim H.S."/>
            <person name="Shabalina S.A."/>
            <person name="Pearson T.R."/>
            <person name="Brinkac L."/>
            <person name="Tan P."/>
            <person name="Nandi T."/>
            <person name="Crabtree J."/>
            <person name="Badger J."/>
            <person name="Beckstrom-Sternberg S."/>
            <person name="Saqib M."/>
            <person name="Schutzer S.E."/>
            <person name="Keim P."/>
            <person name="Nierman W.C."/>
        </authorList>
    </citation>
    <scope>NUCLEOTIDE SEQUENCE [LARGE SCALE GENOMIC DNA]</scope>
    <source>
        <strain>NCTC 10247</strain>
    </source>
</reference>
<protein>
    <recommendedName>
        <fullName evidence="1">Crossover junction endodeoxyribonuclease RuvC</fullName>
        <ecNumber evidence="1">3.1.21.10</ecNumber>
    </recommendedName>
    <alternativeName>
        <fullName evidence="1">Holliday junction nuclease RuvC</fullName>
    </alternativeName>
    <alternativeName>
        <fullName evidence="1">Holliday junction resolvase RuvC</fullName>
    </alternativeName>
</protein>
<proteinExistence type="inferred from homology"/>
<evidence type="ECO:0000255" key="1">
    <source>
        <dbReference type="HAMAP-Rule" id="MF_00034"/>
    </source>
</evidence>
<accession>A3MP74</accession>
<comment type="function">
    <text evidence="1">The RuvA-RuvB-RuvC complex processes Holliday junction (HJ) DNA during genetic recombination and DNA repair. Endonuclease that resolves HJ intermediates. Cleaves cruciform DNA by making single-stranded nicks across the HJ at symmetrical positions within the homologous arms, yielding a 5'-phosphate and a 3'-hydroxyl group; requires a central core of homology in the junction. The consensus cleavage sequence is 5'-(A/T)TT(C/G)-3'. Cleavage occurs on the 3'-side of the TT dinucleotide at the point of strand exchange. HJ branch migration catalyzed by RuvA-RuvB allows RuvC to scan DNA until it finds its consensus sequence, where it cleaves and resolves the cruciform DNA.</text>
</comment>
<comment type="catalytic activity">
    <reaction evidence="1">
        <text>Endonucleolytic cleavage at a junction such as a reciprocal single-stranded crossover between two homologous DNA duplexes (Holliday junction).</text>
        <dbReference type="EC" id="3.1.21.10"/>
    </reaction>
</comment>
<comment type="cofactor">
    <cofactor evidence="1">
        <name>Mg(2+)</name>
        <dbReference type="ChEBI" id="CHEBI:18420"/>
    </cofactor>
    <text evidence="1">Binds 2 Mg(2+) ion per subunit.</text>
</comment>
<comment type="subunit">
    <text evidence="1">Homodimer which binds Holliday junction (HJ) DNA. The HJ becomes 2-fold symmetrical on binding to RuvC with unstacked arms; it has a different conformation from HJ DNA in complex with RuvA. In the full resolvosome a probable DNA-RuvA(4)-RuvB(12)-RuvC(2) complex forms which resolves the HJ.</text>
</comment>
<comment type="subcellular location">
    <subcellularLocation>
        <location evidence="1">Cytoplasm</location>
    </subcellularLocation>
</comment>
<comment type="similarity">
    <text evidence="1">Belongs to the RuvC family.</text>
</comment>
<organism>
    <name type="scientific">Burkholderia mallei (strain NCTC 10247)</name>
    <dbReference type="NCBI Taxonomy" id="320389"/>
    <lineage>
        <taxon>Bacteria</taxon>
        <taxon>Pseudomonadati</taxon>
        <taxon>Pseudomonadota</taxon>
        <taxon>Betaproteobacteria</taxon>
        <taxon>Burkholderiales</taxon>
        <taxon>Burkholderiaceae</taxon>
        <taxon>Burkholderia</taxon>
        <taxon>pseudomallei group</taxon>
    </lineage>
</organism>
<dbReference type="EC" id="3.1.21.10" evidence="1"/>
<dbReference type="EMBL" id="CP000548">
    <property type="protein sequence ID" value="ABO07174.1"/>
    <property type="molecule type" value="Genomic_DNA"/>
</dbReference>
<dbReference type="RefSeq" id="WP_004196340.1">
    <property type="nucleotide sequence ID" value="NZ_CP007802.1"/>
</dbReference>
<dbReference type="SMR" id="A3MP74"/>
<dbReference type="GeneID" id="93061492"/>
<dbReference type="KEGG" id="bmaz:BM44_770"/>
<dbReference type="KEGG" id="bmn:BMA10247_2534"/>
<dbReference type="PATRIC" id="fig|320389.8.peg.856"/>
<dbReference type="GO" id="GO:0005737">
    <property type="term" value="C:cytoplasm"/>
    <property type="evidence" value="ECO:0007669"/>
    <property type="project" value="UniProtKB-SubCell"/>
</dbReference>
<dbReference type="GO" id="GO:0048476">
    <property type="term" value="C:Holliday junction resolvase complex"/>
    <property type="evidence" value="ECO:0007669"/>
    <property type="project" value="UniProtKB-UniRule"/>
</dbReference>
<dbReference type="GO" id="GO:0008821">
    <property type="term" value="F:crossover junction DNA endonuclease activity"/>
    <property type="evidence" value="ECO:0007669"/>
    <property type="project" value="UniProtKB-UniRule"/>
</dbReference>
<dbReference type="GO" id="GO:0003677">
    <property type="term" value="F:DNA binding"/>
    <property type="evidence" value="ECO:0007669"/>
    <property type="project" value="UniProtKB-KW"/>
</dbReference>
<dbReference type="GO" id="GO:0000287">
    <property type="term" value="F:magnesium ion binding"/>
    <property type="evidence" value="ECO:0007669"/>
    <property type="project" value="UniProtKB-UniRule"/>
</dbReference>
<dbReference type="GO" id="GO:0006310">
    <property type="term" value="P:DNA recombination"/>
    <property type="evidence" value="ECO:0007669"/>
    <property type="project" value="UniProtKB-UniRule"/>
</dbReference>
<dbReference type="GO" id="GO:0006281">
    <property type="term" value="P:DNA repair"/>
    <property type="evidence" value="ECO:0007669"/>
    <property type="project" value="UniProtKB-UniRule"/>
</dbReference>
<dbReference type="CDD" id="cd16962">
    <property type="entry name" value="RuvC"/>
    <property type="match status" value="1"/>
</dbReference>
<dbReference type="FunFam" id="3.30.420.10:FF:000002">
    <property type="entry name" value="Crossover junction endodeoxyribonuclease RuvC"/>
    <property type="match status" value="1"/>
</dbReference>
<dbReference type="Gene3D" id="3.30.420.10">
    <property type="entry name" value="Ribonuclease H-like superfamily/Ribonuclease H"/>
    <property type="match status" value="1"/>
</dbReference>
<dbReference type="HAMAP" id="MF_00034">
    <property type="entry name" value="RuvC"/>
    <property type="match status" value="1"/>
</dbReference>
<dbReference type="InterPro" id="IPR012337">
    <property type="entry name" value="RNaseH-like_sf"/>
</dbReference>
<dbReference type="InterPro" id="IPR036397">
    <property type="entry name" value="RNaseH_sf"/>
</dbReference>
<dbReference type="InterPro" id="IPR020563">
    <property type="entry name" value="X-over_junc_endoDNase_Mg_BS"/>
</dbReference>
<dbReference type="InterPro" id="IPR002176">
    <property type="entry name" value="X-over_junc_endoDNase_RuvC"/>
</dbReference>
<dbReference type="NCBIfam" id="TIGR00228">
    <property type="entry name" value="ruvC"/>
    <property type="match status" value="1"/>
</dbReference>
<dbReference type="PANTHER" id="PTHR30194">
    <property type="entry name" value="CROSSOVER JUNCTION ENDODEOXYRIBONUCLEASE RUVC"/>
    <property type="match status" value="1"/>
</dbReference>
<dbReference type="PANTHER" id="PTHR30194:SF3">
    <property type="entry name" value="CROSSOVER JUNCTION ENDODEOXYRIBONUCLEASE RUVC"/>
    <property type="match status" value="1"/>
</dbReference>
<dbReference type="Pfam" id="PF02075">
    <property type="entry name" value="RuvC"/>
    <property type="match status" value="1"/>
</dbReference>
<dbReference type="PRINTS" id="PR00696">
    <property type="entry name" value="RSOLVASERUVC"/>
</dbReference>
<dbReference type="SUPFAM" id="SSF53098">
    <property type="entry name" value="Ribonuclease H-like"/>
    <property type="match status" value="1"/>
</dbReference>
<dbReference type="PROSITE" id="PS01321">
    <property type="entry name" value="RUVC"/>
    <property type="match status" value="1"/>
</dbReference>
<feature type="chain" id="PRO_1000002730" description="Crossover junction endodeoxyribonuclease RuvC">
    <location>
        <begin position="1"/>
        <end position="180"/>
    </location>
</feature>
<feature type="active site" evidence="1">
    <location>
        <position position="7"/>
    </location>
</feature>
<feature type="active site" evidence="1">
    <location>
        <position position="66"/>
    </location>
</feature>
<feature type="active site" evidence="1">
    <location>
        <position position="138"/>
    </location>
</feature>
<feature type="binding site" evidence="1">
    <location>
        <position position="7"/>
    </location>
    <ligand>
        <name>Mg(2+)</name>
        <dbReference type="ChEBI" id="CHEBI:18420"/>
        <label>1</label>
    </ligand>
</feature>
<feature type="binding site" evidence="1">
    <location>
        <position position="66"/>
    </location>
    <ligand>
        <name>Mg(2+)</name>
        <dbReference type="ChEBI" id="CHEBI:18420"/>
        <label>2</label>
    </ligand>
</feature>
<feature type="binding site" evidence="1">
    <location>
        <position position="138"/>
    </location>
    <ligand>
        <name>Mg(2+)</name>
        <dbReference type="ChEBI" id="CHEBI:18420"/>
        <label>1</label>
    </ligand>
</feature>